<organism>
    <name type="scientific">Notechis scutatus scutatus</name>
    <name type="common">Mainland tiger snake</name>
    <name type="synonym">Common tiger snake</name>
    <dbReference type="NCBI Taxonomy" id="70142"/>
    <lineage>
        <taxon>Eukaryota</taxon>
        <taxon>Metazoa</taxon>
        <taxon>Chordata</taxon>
        <taxon>Craniata</taxon>
        <taxon>Vertebrata</taxon>
        <taxon>Euteleostomi</taxon>
        <taxon>Lepidosauria</taxon>
        <taxon>Squamata</taxon>
        <taxon>Bifurcata</taxon>
        <taxon>Unidentata</taxon>
        <taxon>Episquamata</taxon>
        <taxon>Toxicofera</taxon>
        <taxon>Serpentes</taxon>
        <taxon>Colubroidea</taxon>
        <taxon>Elapidae</taxon>
        <taxon>Hydrophiinae</taxon>
        <taxon>Notechis</taxon>
    </lineage>
</organism>
<keyword id="KW-0165">Cleavage on pair of basic residues</keyword>
<keyword id="KW-1015">Disulfide bond</keyword>
<keyword id="KW-0339">Growth factor</keyword>
<keyword id="KW-0446">Lipid-binding</keyword>
<keyword id="KW-0481">Metalloenzyme inhibitor</keyword>
<keyword id="KW-0483">Metalloprotease inhibitor</keyword>
<keyword id="KW-0646">Protease inhibitor</keyword>
<keyword id="KW-0964">Secreted</keyword>
<keyword id="KW-0732">Signal</keyword>
<keyword id="KW-0800">Toxin</keyword>
<protein>
    <recommendedName>
        <fullName>Venom nerve growth factor 3</fullName>
        <shortName>v-NGF-3</shortName>
        <shortName>vNGF-3</shortName>
    </recommendedName>
</protein>
<reference key="1">
    <citation type="submission" date="2005-08" db="EMBL/GenBank/DDBJ databases">
        <title>Identification of nerve growth factor as a ubiquitous component of Australian elapid snake venoms.</title>
        <authorList>
            <person name="Earl S.T.H."/>
            <person name="St Pierre L."/>
            <person name="Birrell G.W."/>
            <person name="Wallis T.P."/>
            <person name="Masci P.P."/>
            <person name="de Jersey J."/>
            <person name="Gorman J.J."/>
            <person name="Lavin M.F."/>
        </authorList>
    </citation>
    <scope>NUCLEOTIDE SEQUENCE [MRNA]</scope>
    <source>
        <tissue>Venom gland</tissue>
    </source>
</reference>
<sequence>MSMLCYTLIIAFLIGIWAAPKSEDNVPLGSPATSDLSDTSCAQTHEGLKTSRNTDQRHPAPKKAEDQELGSVANIIVDPKLFQKRRFQSSRVLFSTQPPPLSRDEQSVEFLDNEDTLNRNIRAKRENHPVHNQGEHSVCDSVSDWVIKTTATDIRGNMVTVMVDINRDNEVYKQYFFETKCRNPNPNPVQSECRGIDSRLWNSYCTTTRTFVRALTMEGNQASWRFIRIDTACVCVIIRKTDNF</sequence>
<dbReference type="EMBL" id="DQ181910">
    <property type="protein sequence ID" value="ABA60122.1"/>
    <property type="molecule type" value="mRNA"/>
</dbReference>
<dbReference type="SMR" id="Q3HXY5"/>
<dbReference type="GO" id="GO:0030424">
    <property type="term" value="C:axon"/>
    <property type="evidence" value="ECO:0007669"/>
    <property type="project" value="TreeGrafter"/>
</dbReference>
<dbReference type="GO" id="GO:0030425">
    <property type="term" value="C:dendrite"/>
    <property type="evidence" value="ECO:0007669"/>
    <property type="project" value="TreeGrafter"/>
</dbReference>
<dbReference type="GO" id="GO:0005615">
    <property type="term" value="C:extracellular space"/>
    <property type="evidence" value="ECO:0007669"/>
    <property type="project" value="TreeGrafter"/>
</dbReference>
<dbReference type="GO" id="GO:0008021">
    <property type="term" value="C:synaptic vesicle"/>
    <property type="evidence" value="ECO:0007669"/>
    <property type="project" value="TreeGrafter"/>
</dbReference>
<dbReference type="GO" id="GO:0008083">
    <property type="term" value="F:growth factor activity"/>
    <property type="evidence" value="ECO:0007669"/>
    <property type="project" value="UniProtKB-KW"/>
</dbReference>
<dbReference type="GO" id="GO:0008289">
    <property type="term" value="F:lipid binding"/>
    <property type="evidence" value="ECO:0007669"/>
    <property type="project" value="UniProtKB-KW"/>
</dbReference>
<dbReference type="GO" id="GO:0008191">
    <property type="term" value="F:metalloendopeptidase inhibitor activity"/>
    <property type="evidence" value="ECO:0000250"/>
    <property type="project" value="UniProtKB"/>
</dbReference>
<dbReference type="GO" id="GO:0005163">
    <property type="term" value="F:nerve growth factor receptor binding"/>
    <property type="evidence" value="ECO:0007669"/>
    <property type="project" value="TreeGrafter"/>
</dbReference>
<dbReference type="GO" id="GO:0090729">
    <property type="term" value="F:toxin activity"/>
    <property type="evidence" value="ECO:0007669"/>
    <property type="project" value="UniProtKB-KW"/>
</dbReference>
<dbReference type="GO" id="GO:0007169">
    <property type="term" value="P:cell surface receptor protein tyrosine kinase signaling pathway"/>
    <property type="evidence" value="ECO:0007669"/>
    <property type="project" value="TreeGrafter"/>
</dbReference>
<dbReference type="GO" id="GO:0050804">
    <property type="term" value="P:modulation of chemical synaptic transmission"/>
    <property type="evidence" value="ECO:0007669"/>
    <property type="project" value="TreeGrafter"/>
</dbReference>
<dbReference type="GO" id="GO:0043524">
    <property type="term" value="P:negative regulation of neuron apoptotic process"/>
    <property type="evidence" value="ECO:0007669"/>
    <property type="project" value="TreeGrafter"/>
</dbReference>
<dbReference type="GO" id="GO:0021675">
    <property type="term" value="P:nerve development"/>
    <property type="evidence" value="ECO:0007669"/>
    <property type="project" value="TreeGrafter"/>
</dbReference>
<dbReference type="GO" id="GO:0038180">
    <property type="term" value="P:nerve growth factor signaling pathway"/>
    <property type="evidence" value="ECO:0007669"/>
    <property type="project" value="TreeGrafter"/>
</dbReference>
<dbReference type="GO" id="GO:0048812">
    <property type="term" value="P:neuron projection morphogenesis"/>
    <property type="evidence" value="ECO:0007669"/>
    <property type="project" value="TreeGrafter"/>
</dbReference>
<dbReference type="FunFam" id="2.10.90.10:FF:000002">
    <property type="entry name" value="Brain-derived neurotrophic factor"/>
    <property type="match status" value="1"/>
</dbReference>
<dbReference type="Gene3D" id="2.10.90.10">
    <property type="entry name" value="Cystine-knot cytokines"/>
    <property type="match status" value="1"/>
</dbReference>
<dbReference type="InterPro" id="IPR029034">
    <property type="entry name" value="Cystine-knot_cytokine"/>
</dbReference>
<dbReference type="InterPro" id="IPR020408">
    <property type="entry name" value="Nerve_growth_factor-like"/>
</dbReference>
<dbReference type="InterPro" id="IPR002072">
    <property type="entry name" value="Nerve_growth_factor-rel"/>
</dbReference>
<dbReference type="InterPro" id="IPR020425">
    <property type="entry name" value="Nerve_growth_factor_bsu"/>
</dbReference>
<dbReference type="InterPro" id="IPR019846">
    <property type="entry name" value="Nerve_growth_factor_CS"/>
</dbReference>
<dbReference type="InterPro" id="IPR020433">
    <property type="entry name" value="Venom_nerve_growth_factor"/>
</dbReference>
<dbReference type="PANTHER" id="PTHR11589:SF10">
    <property type="entry name" value="BETA-NERVE GROWTH FACTOR"/>
    <property type="match status" value="1"/>
</dbReference>
<dbReference type="PANTHER" id="PTHR11589">
    <property type="entry name" value="NERVE GROWTH FACTOR NGF -RELATED"/>
    <property type="match status" value="1"/>
</dbReference>
<dbReference type="Pfam" id="PF00243">
    <property type="entry name" value="NGF"/>
    <property type="match status" value="1"/>
</dbReference>
<dbReference type="PIRSF" id="PIRSF001789">
    <property type="entry name" value="NGF"/>
    <property type="match status" value="1"/>
</dbReference>
<dbReference type="PRINTS" id="PR00268">
    <property type="entry name" value="NGF"/>
</dbReference>
<dbReference type="PRINTS" id="PR01913">
    <property type="entry name" value="NGFBETA"/>
</dbReference>
<dbReference type="PRINTS" id="PR01917">
    <property type="entry name" value="VENOMNGF"/>
</dbReference>
<dbReference type="SMART" id="SM00140">
    <property type="entry name" value="NGF"/>
    <property type="match status" value="1"/>
</dbReference>
<dbReference type="SUPFAM" id="SSF57501">
    <property type="entry name" value="Cystine-knot cytokines"/>
    <property type="match status" value="1"/>
</dbReference>
<dbReference type="PROSITE" id="PS00248">
    <property type="entry name" value="NGF_1"/>
    <property type="match status" value="1"/>
</dbReference>
<dbReference type="PROSITE" id="PS50270">
    <property type="entry name" value="NGF_2"/>
    <property type="match status" value="1"/>
</dbReference>
<name>NGFV3_NOTSC</name>
<evidence type="ECO:0000250" key="1"/>
<evidence type="ECO:0000250" key="2">
    <source>
        <dbReference type="UniProtKB" id="P61898"/>
    </source>
</evidence>
<evidence type="ECO:0000250" key="3">
    <source>
        <dbReference type="UniProtKB" id="P61899"/>
    </source>
</evidence>
<evidence type="ECO:0000255" key="4"/>
<evidence type="ECO:0000256" key="5">
    <source>
        <dbReference type="SAM" id="MobiDB-lite"/>
    </source>
</evidence>
<evidence type="ECO:0000305" key="6"/>
<accession>Q3HXY5</accession>
<proteinExistence type="evidence at transcript level"/>
<comment type="function">
    <text evidence="2 3">Nerve growth factor is important for the development and maintenance of the sympathetic and sensory nervous systems. It stimulates division and differentiation of sympathetic and embryonic sensory neurons as well as basal forebrain cholinergic neurons in the brain. Its relevance in the snake venom is not clear. However, it has been shown to inhibit metalloproteinase-dependent proteolysis of platelet glycoprotein Ib alpha, suggesting a metalloproteinase inhibition to prevent metalloprotease autodigestion and/or protection against prey proteases (By similarity). Binds a lipid between the two protein chains in the homodimer. The lipid-bound form promotes histamine relase from mouse mast cells, contrary to the lipid-free form (By similarity).</text>
</comment>
<comment type="subunit">
    <text evidence="2">Homodimer; non-covalently linked.</text>
</comment>
<comment type="subcellular location">
    <subcellularLocation>
        <location evidence="2">Secreted</location>
    </subcellularLocation>
</comment>
<comment type="tissue specificity">
    <text>Expressed by the venom gland.</text>
</comment>
<comment type="similarity">
    <text evidence="6">Belongs to the NGF-beta family.</text>
</comment>
<feature type="signal peptide" evidence="4">
    <location>
        <begin position="1"/>
        <end position="18"/>
    </location>
</feature>
<feature type="propeptide" id="PRO_0000043298" evidence="1">
    <location>
        <begin position="19"/>
        <end position="125"/>
    </location>
</feature>
<feature type="chain" id="PRO_0000043299" description="Venom nerve growth factor 3">
    <location>
        <begin position="126"/>
        <end position="244"/>
    </location>
</feature>
<feature type="region of interest" description="Disordered" evidence="5">
    <location>
        <begin position="47"/>
        <end position="67"/>
    </location>
</feature>
<feature type="compositionally biased region" description="Basic and acidic residues" evidence="5">
    <location>
        <begin position="47"/>
        <end position="66"/>
    </location>
</feature>
<feature type="disulfide bond" evidence="2">
    <location>
        <begin position="139"/>
        <end position="205"/>
    </location>
</feature>
<feature type="disulfide bond" evidence="2">
    <location>
        <begin position="181"/>
        <end position="233"/>
    </location>
</feature>
<feature type="disulfide bond" evidence="2">
    <location>
        <begin position="193"/>
        <end position="235"/>
    </location>
</feature>